<dbReference type="EC" id="2.6.1.9" evidence="1"/>
<dbReference type="EMBL" id="AP009324">
    <property type="protein sequence ID" value="BAF77604.1"/>
    <property type="molecule type" value="Genomic_DNA"/>
</dbReference>
<dbReference type="RefSeq" id="WP_000663030.1">
    <property type="nucleotide sequence ID" value="NZ_CTYB01000002.1"/>
</dbReference>
<dbReference type="SMR" id="A7WZL0"/>
<dbReference type="KEGG" id="saw:SAHV_0721"/>
<dbReference type="HOGENOM" id="CLU_017584_3_3_9"/>
<dbReference type="UniPathway" id="UPA00031">
    <property type="reaction ID" value="UER00012"/>
</dbReference>
<dbReference type="GO" id="GO:0004400">
    <property type="term" value="F:histidinol-phosphate transaminase activity"/>
    <property type="evidence" value="ECO:0007669"/>
    <property type="project" value="UniProtKB-UniRule"/>
</dbReference>
<dbReference type="GO" id="GO:0030170">
    <property type="term" value="F:pyridoxal phosphate binding"/>
    <property type="evidence" value="ECO:0007669"/>
    <property type="project" value="InterPro"/>
</dbReference>
<dbReference type="GO" id="GO:0000105">
    <property type="term" value="P:L-histidine biosynthetic process"/>
    <property type="evidence" value="ECO:0007669"/>
    <property type="project" value="UniProtKB-UniRule"/>
</dbReference>
<dbReference type="CDD" id="cd00609">
    <property type="entry name" value="AAT_like"/>
    <property type="match status" value="1"/>
</dbReference>
<dbReference type="Gene3D" id="3.90.1150.10">
    <property type="entry name" value="Aspartate Aminotransferase, domain 1"/>
    <property type="match status" value="1"/>
</dbReference>
<dbReference type="Gene3D" id="3.40.640.10">
    <property type="entry name" value="Type I PLP-dependent aspartate aminotransferase-like (Major domain)"/>
    <property type="match status" value="1"/>
</dbReference>
<dbReference type="HAMAP" id="MF_01023">
    <property type="entry name" value="HisC_aminotrans_2"/>
    <property type="match status" value="1"/>
</dbReference>
<dbReference type="InterPro" id="IPR001917">
    <property type="entry name" value="Aminotrans_II_pyridoxalP_BS"/>
</dbReference>
<dbReference type="InterPro" id="IPR004839">
    <property type="entry name" value="Aminotransferase_I/II_large"/>
</dbReference>
<dbReference type="InterPro" id="IPR005861">
    <property type="entry name" value="HisP_aminotrans"/>
</dbReference>
<dbReference type="InterPro" id="IPR050106">
    <property type="entry name" value="HistidinolP_aminotransfase"/>
</dbReference>
<dbReference type="InterPro" id="IPR015424">
    <property type="entry name" value="PyrdxlP-dep_Trfase"/>
</dbReference>
<dbReference type="InterPro" id="IPR015421">
    <property type="entry name" value="PyrdxlP-dep_Trfase_major"/>
</dbReference>
<dbReference type="InterPro" id="IPR015422">
    <property type="entry name" value="PyrdxlP-dep_Trfase_small"/>
</dbReference>
<dbReference type="NCBIfam" id="TIGR01141">
    <property type="entry name" value="hisC"/>
    <property type="match status" value="1"/>
</dbReference>
<dbReference type="PANTHER" id="PTHR43643:SF3">
    <property type="entry name" value="HISTIDINOL-PHOSPHATE AMINOTRANSFERASE"/>
    <property type="match status" value="1"/>
</dbReference>
<dbReference type="PANTHER" id="PTHR43643">
    <property type="entry name" value="HISTIDINOL-PHOSPHATE AMINOTRANSFERASE 2"/>
    <property type="match status" value="1"/>
</dbReference>
<dbReference type="Pfam" id="PF00155">
    <property type="entry name" value="Aminotran_1_2"/>
    <property type="match status" value="1"/>
</dbReference>
<dbReference type="SUPFAM" id="SSF53383">
    <property type="entry name" value="PLP-dependent transferases"/>
    <property type="match status" value="1"/>
</dbReference>
<dbReference type="PROSITE" id="PS00599">
    <property type="entry name" value="AA_TRANSFER_CLASS_2"/>
    <property type="match status" value="1"/>
</dbReference>
<reference key="1">
    <citation type="journal article" date="2008" name="Antimicrob. Agents Chemother.">
        <title>Mutated response regulator graR is responsible for phenotypic conversion of Staphylococcus aureus from heterogeneous vancomycin-intermediate resistance to vancomycin-intermediate resistance.</title>
        <authorList>
            <person name="Neoh H.-M."/>
            <person name="Cui L."/>
            <person name="Yuzawa H."/>
            <person name="Takeuchi F."/>
            <person name="Matsuo M."/>
            <person name="Hiramatsu K."/>
        </authorList>
    </citation>
    <scope>NUCLEOTIDE SEQUENCE [LARGE SCALE GENOMIC DNA]</scope>
    <source>
        <strain>Mu3 / ATCC 700698</strain>
    </source>
</reference>
<name>HIS8_STAA1</name>
<keyword id="KW-0028">Amino-acid biosynthesis</keyword>
<keyword id="KW-0032">Aminotransferase</keyword>
<keyword id="KW-0368">Histidine biosynthesis</keyword>
<keyword id="KW-0663">Pyridoxal phosphate</keyword>
<keyword id="KW-0808">Transferase</keyword>
<organism>
    <name type="scientific">Staphylococcus aureus (strain Mu3 / ATCC 700698)</name>
    <dbReference type="NCBI Taxonomy" id="418127"/>
    <lineage>
        <taxon>Bacteria</taxon>
        <taxon>Bacillati</taxon>
        <taxon>Bacillota</taxon>
        <taxon>Bacilli</taxon>
        <taxon>Bacillales</taxon>
        <taxon>Staphylococcaceae</taxon>
        <taxon>Staphylococcus</taxon>
    </lineage>
</organism>
<accession>A7WZL0</accession>
<comment type="catalytic activity">
    <reaction evidence="1">
        <text>L-histidinol phosphate + 2-oxoglutarate = 3-(imidazol-4-yl)-2-oxopropyl phosphate + L-glutamate</text>
        <dbReference type="Rhea" id="RHEA:23744"/>
        <dbReference type="ChEBI" id="CHEBI:16810"/>
        <dbReference type="ChEBI" id="CHEBI:29985"/>
        <dbReference type="ChEBI" id="CHEBI:57766"/>
        <dbReference type="ChEBI" id="CHEBI:57980"/>
        <dbReference type="EC" id="2.6.1.9"/>
    </reaction>
</comment>
<comment type="cofactor">
    <cofactor evidence="1">
        <name>pyridoxal 5'-phosphate</name>
        <dbReference type="ChEBI" id="CHEBI:597326"/>
    </cofactor>
</comment>
<comment type="pathway">
    <text evidence="1">Amino-acid biosynthesis; L-histidine biosynthesis; L-histidine from 5-phospho-alpha-D-ribose 1-diphosphate: step 7/9.</text>
</comment>
<comment type="subunit">
    <text evidence="1">Homodimer.</text>
</comment>
<comment type="similarity">
    <text evidence="1">Belongs to the class-II pyridoxal-phosphate-dependent aminotransferase family. Histidinol-phosphate aminotransferase subfamily.</text>
</comment>
<gene>
    <name evidence="1" type="primary">hisC</name>
    <name type="ordered locus">SAHV_0721</name>
</gene>
<protein>
    <recommendedName>
        <fullName evidence="1">Histidinol-phosphate aminotransferase</fullName>
        <ecNumber evidence="1">2.6.1.9</ecNumber>
    </recommendedName>
    <alternativeName>
        <fullName evidence="1">Imidazole acetol-phosphate transaminase</fullName>
    </alternativeName>
</protein>
<sequence>MKEQLNQLSAYQPGLSPRALKEKYGIEGDLYKLASNENLYGPSPKVKEAISAHLDELYYYPETGSPTLKAAISKHLNVDQSRILFGAGLDEVILMISRAVLTPGDTIVTSEATFGQYYHNAIVESANVIQVPLKDGGFDLEGILKEVNEDTSLVWLCNPNNPTGTYFNHESLDSFLSQVPPHVPVIIDEAYFEFVTAEDYPDTLALQQKYDNAFLLRTFSKAYGLAGLRVGYVVASEHAIEKWNIIRPPFNVTRISEYAAVAALEDQQYLKEVTHKNSVERERFYQLPQSEYFLPSQTNFIFVKTKRVNELYEALLNVGCITRPFPTGVRITIGFKEQNDKMLEVLSNFKYE</sequence>
<evidence type="ECO:0000255" key="1">
    <source>
        <dbReference type="HAMAP-Rule" id="MF_01023"/>
    </source>
</evidence>
<feature type="chain" id="PRO_1000063503" description="Histidinol-phosphate aminotransferase">
    <location>
        <begin position="1"/>
        <end position="352"/>
    </location>
</feature>
<feature type="modified residue" description="N6-(pyridoxal phosphate)lysine" evidence="1">
    <location>
        <position position="221"/>
    </location>
</feature>
<proteinExistence type="inferred from homology"/>